<name>NRDR_BACC7</name>
<organism>
    <name type="scientific">Bacillus cereus (strain AH187)</name>
    <dbReference type="NCBI Taxonomy" id="405534"/>
    <lineage>
        <taxon>Bacteria</taxon>
        <taxon>Bacillati</taxon>
        <taxon>Bacillota</taxon>
        <taxon>Bacilli</taxon>
        <taxon>Bacillales</taxon>
        <taxon>Bacillaceae</taxon>
        <taxon>Bacillus</taxon>
        <taxon>Bacillus cereus group</taxon>
    </lineage>
</organism>
<evidence type="ECO:0000255" key="1">
    <source>
        <dbReference type="HAMAP-Rule" id="MF_00440"/>
    </source>
</evidence>
<comment type="function">
    <text evidence="1">Negatively regulates transcription of bacterial ribonucleotide reductase nrd genes and operons by binding to NrdR-boxes.</text>
</comment>
<comment type="cofactor">
    <cofactor evidence="1">
        <name>Zn(2+)</name>
        <dbReference type="ChEBI" id="CHEBI:29105"/>
    </cofactor>
    <text evidence="1">Binds 1 zinc ion.</text>
</comment>
<comment type="similarity">
    <text evidence="1">Belongs to the NrdR family.</text>
</comment>
<reference key="1">
    <citation type="submission" date="2008-10" db="EMBL/GenBank/DDBJ databases">
        <title>Genome sequence of Bacillus cereus AH187.</title>
        <authorList>
            <person name="Dodson R.J."/>
            <person name="Durkin A.S."/>
            <person name="Rosovitz M.J."/>
            <person name="Rasko D.A."/>
            <person name="Kolsto A.B."/>
            <person name="Okstad O.A."/>
            <person name="Ravel J."/>
            <person name="Sutton G."/>
        </authorList>
    </citation>
    <scope>NUCLEOTIDE SEQUENCE [LARGE SCALE GENOMIC DNA]</scope>
    <source>
        <strain>AH187</strain>
    </source>
</reference>
<sequence length="153" mass="18024">MRCPSCSHNGTRVLDSRPVDEGRSIRRRRECESCLSRFTTFERVEESPLIVVKKEGTREEFNKEKILRGLIKACEKRPVSLRQLEEVTQSVERELRNLGISEVKSDMIGEIVMEELRDIDDVAYVRFASVYRQFKDLNVFIEELKDILQKERE</sequence>
<feature type="chain" id="PRO_1000124469" description="Transcriptional repressor NrdR">
    <location>
        <begin position="1"/>
        <end position="153"/>
    </location>
</feature>
<feature type="domain" description="ATP-cone" evidence="1">
    <location>
        <begin position="49"/>
        <end position="139"/>
    </location>
</feature>
<feature type="zinc finger region" evidence="1">
    <location>
        <begin position="3"/>
        <end position="34"/>
    </location>
</feature>
<protein>
    <recommendedName>
        <fullName evidence="1">Transcriptional repressor NrdR</fullName>
    </recommendedName>
</protein>
<dbReference type="EMBL" id="CP001177">
    <property type="protein sequence ID" value="ACJ81892.1"/>
    <property type="molecule type" value="Genomic_DNA"/>
</dbReference>
<dbReference type="SMR" id="B7HRL9"/>
<dbReference type="KEGG" id="bcr:BCAH187_A4705"/>
<dbReference type="HOGENOM" id="CLU_108412_0_0_9"/>
<dbReference type="Proteomes" id="UP000002214">
    <property type="component" value="Chromosome"/>
</dbReference>
<dbReference type="GO" id="GO:0005524">
    <property type="term" value="F:ATP binding"/>
    <property type="evidence" value="ECO:0007669"/>
    <property type="project" value="UniProtKB-KW"/>
</dbReference>
<dbReference type="GO" id="GO:0003677">
    <property type="term" value="F:DNA binding"/>
    <property type="evidence" value="ECO:0007669"/>
    <property type="project" value="UniProtKB-KW"/>
</dbReference>
<dbReference type="GO" id="GO:0008270">
    <property type="term" value="F:zinc ion binding"/>
    <property type="evidence" value="ECO:0007669"/>
    <property type="project" value="UniProtKB-UniRule"/>
</dbReference>
<dbReference type="GO" id="GO:0045892">
    <property type="term" value="P:negative regulation of DNA-templated transcription"/>
    <property type="evidence" value="ECO:0007669"/>
    <property type="project" value="UniProtKB-UniRule"/>
</dbReference>
<dbReference type="HAMAP" id="MF_00440">
    <property type="entry name" value="NrdR"/>
    <property type="match status" value="1"/>
</dbReference>
<dbReference type="InterPro" id="IPR005144">
    <property type="entry name" value="ATP-cone_dom"/>
</dbReference>
<dbReference type="InterPro" id="IPR055173">
    <property type="entry name" value="NrdR-like_N"/>
</dbReference>
<dbReference type="InterPro" id="IPR003796">
    <property type="entry name" value="RNR_NrdR-like"/>
</dbReference>
<dbReference type="NCBIfam" id="TIGR00244">
    <property type="entry name" value="transcriptional regulator NrdR"/>
    <property type="match status" value="1"/>
</dbReference>
<dbReference type="PANTHER" id="PTHR30455">
    <property type="entry name" value="TRANSCRIPTIONAL REPRESSOR NRDR"/>
    <property type="match status" value="1"/>
</dbReference>
<dbReference type="PANTHER" id="PTHR30455:SF2">
    <property type="entry name" value="TRANSCRIPTIONAL REPRESSOR NRDR"/>
    <property type="match status" value="1"/>
</dbReference>
<dbReference type="Pfam" id="PF03477">
    <property type="entry name" value="ATP-cone"/>
    <property type="match status" value="1"/>
</dbReference>
<dbReference type="Pfam" id="PF22811">
    <property type="entry name" value="Zn_ribbon_NrdR"/>
    <property type="match status" value="1"/>
</dbReference>
<dbReference type="PROSITE" id="PS51161">
    <property type="entry name" value="ATP_CONE"/>
    <property type="match status" value="1"/>
</dbReference>
<accession>B7HRL9</accession>
<gene>
    <name evidence="1" type="primary">nrdR</name>
    <name type="ordered locus">BCAH187_A4705</name>
</gene>
<proteinExistence type="inferred from homology"/>
<keyword id="KW-0067">ATP-binding</keyword>
<keyword id="KW-0238">DNA-binding</keyword>
<keyword id="KW-0479">Metal-binding</keyword>
<keyword id="KW-0547">Nucleotide-binding</keyword>
<keyword id="KW-0678">Repressor</keyword>
<keyword id="KW-0804">Transcription</keyword>
<keyword id="KW-0805">Transcription regulation</keyword>
<keyword id="KW-0862">Zinc</keyword>
<keyword id="KW-0863">Zinc-finger</keyword>